<proteinExistence type="inferred from homology"/>
<name>RPO10_PYRAR</name>
<reference key="1">
    <citation type="submission" date="2007-04" db="EMBL/GenBank/DDBJ databases">
        <title>Complete sequence of Pyrobaculum arsenaticum DSM 13514.</title>
        <authorList>
            <consortium name="US DOE Joint Genome Institute"/>
            <person name="Copeland A."/>
            <person name="Lucas S."/>
            <person name="Lapidus A."/>
            <person name="Barry K."/>
            <person name="Glavina del Rio T."/>
            <person name="Dalin E."/>
            <person name="Tice H."/>
            <person name="Pitluck S."/>
            <person name="Chain P."/>
            <person name="Malfatti S."/>
            <person name="Shin M."/>
            <person name="Vergez L."/>
            <person name="Schmutz J."/>
            <person name="Larimer F."/>
            <person name="Land M."/>
            <person name="Hauser L."/>
            <person name="Kyrpides N."/>
            <person name="Mikhailova N."/>
            <person name="Cozen A.E."/>
            <person name="Fitz-Gibbon S.T."/>
            <person name="House C.H."/>
            <person name="Saltikov C."/>
            <person name="Lowe T.M."/>
            <person name="Richardson P."/>
        </authorList>
    </citation>
    <scope>NUCLEOTIDE SEQUENCE [LARGE SCALE GENOMIC DNA]</scope>
    <source>
        <strain>ATCC 700994 / DSM 13514 / JCM 11321 / PZ6</strain>
    </source>
</reference>
<keyword id="KW-0963">Cytoplasm</keyword>
<keyword id="KW-0240">DNA-directed RNA polymerase</keyword>
<keyword id="KW-0479">Metal-binding</keyword>
<keyword id="KW-0548">Nucleotidyltransferase</keyword>
<keyword id="KW-0804">Transcription</keyword>
<keyword id="KW-0808">Transferase</keyword>
<keyword id="KW-0862">Zinc</keyword>
<sequence length="65" mass="7544">MIIPVRCFTCGKPLGHLYAVFKQRVLAGEHPGKVLDDLGLVRYCCRRTLMAHVEWIDDVLIYEKR</sequence>
<evidence type="ECO:0000255" key="1">
    <source>
        <dbReference type="HAMAP-Rule" id="MF_00250"/>
    </source>
</evidence>
<protein>
    <recommendedName>
        <fullName evidence="1">DNA-directed RNA polymerase subunit Rpo10</fullName>
        <ecNumber evidence="1">2.7.7.6</ecNumber>
    </recommendedName>
    <alternativeName>
        <fullName evidence="1">DNA-directed RNA polymerase subunit N</fullName>
    </alternativeName>
</protein>
<comment type="function">
    <text evidence="1">DNA-dependent RNA polymerase (RNAP) catalyzes the transcription of DNA into RNA using the four ribonucleoside triphosphates as substrates.</text>
</comment>
<comment type="catalytic activity">
    <reaction evidence="1">
        <text>RNA(n) + a ribonucleoside 5'-triphosphate = RNA(n+1) + diphosphate</text>
        <dbReference type="Rhea" id="RHEA:21248"/>
        <dbReference type="Rhea" id="RHEA-COMP:14527"/>
        <dbReference type="Rhea" id="RHEA-COMP:17342"/>
        <dbReference type="ChEBI" id="CHEBI:33019"/>
        <dbReference type="ChEBI" id="CHEBI:61557"/>
        <dbReference type="ChEBI" id="CHEBI:140395"/>
        <dbReference type="EC" id="2.7.7.6"/>
    </reaction>
</comment>
<comment type="cofactor">
    <cofactor evidence="1">
        <name>Zn(2+)</name>
        <dbReference type="ChEBI" id="CHEBI:29105"/>
    </cofactor>
    <text evidence="1">Binds 1 zinc ion.</text>
</comment>
<comment type="subunit">
    <text evidence="1">Part of the RNA polymerase complex.</text>
</comment>
<comment type="subcellular location">
    <subcellularLocation>
        <location evidence="1">Cytoplasm</location>
    </subcellularLocation>
</comment>
<comment type="similarity">
    <text evidence="1">Belongs to the archaeal Rpo10/eukaryotic RPB10 RNA polymerase subunit family.</text>
</comment>
<organism>
    <name type="scientific">Pyrobaculum arsenaticum (strain DSM 13514 / JCM 11321 / PZ6)</name>
    <dbReference type="NCBI Taxonomy" id="340102"/>
    <lineage>
        <taxon>Archaea</taxon>
        <taxon>Thermoproteota</taxon>
        <taxon>Thermoprotei</taxon>
        <taxon>Thermoproteales</taxon>
        <taxon>Thermoproteaceae</taxon>
        <taxon>Pyrobaculum</taxon>
    </lineage>
</organism>
<dbReference type="EC" id="2.7.7.6" evidence="1"/>
<dbReference type="EMBL" id="CP000660">
    <property type="protein sequence ID" value="ABP51875.1"/>
    <property type="molecule type" value="Genomic_DNA"/>
</dbReference>
<dbReference type="SMR" id="A4WNA8"/>
<dbReference type="STRING" id="340102.Pars_2331"/>
<dbReference type="KEGG" id="pas:Pars_2331"/>
<dbReference type="HOGENOM" id="CLU_143122_1_1_2"/>
<dbReference type="OrthoDB" id="371754at2157"/>
<dbReference type="PhylomeDB" id="A4WNA8"/>
<dbReference type="Proteomes" id="UP000001567">
    <property type="component" value="Chromosome"/>
</dbReference>
<dbReference type="GO" id="GO:0005737">
    <property type="term" value="C:cytoplasm"/>
    <property type="evidence" value="ECO:0007669"/>
    <property type="project" value="UniProtKB-SubCell"/>
</dbReference>
<dbReference type="GO" id="GO:0000428">
    <property type="term" value="C:DNA-directed RNA polymerase complex"/>
    <property type="evidence" value="ECO:0007669"/>
    <property type="project" value="UniProtKB-KW"/>
</dbReference>
<dbReference type="GO" id="GO:0003677">
    <property type="term" value="F:DNA binding"/>
    <property type="evidence" value="ECO:0007669"/>
    <property type="project" value="InterPro"/>
</dbReference>
<dbReference type="GO" id="GO:0003899">
    <property type="term" value="F:DNA-directed RNA polymerase activity"/>
    <property type="evidence" value="ECO:0007669"/>
    <property type="project" value="UniProtKB-UniRule"/>
</dbReference>
<dbReference type="GO" id="GO:0008270">
    <property type="term" value="F:zinc ion binding"/>
    <property type="evidence" value="ECO:0007669"/>
    <property type="project" value="UniProtKB-UniRule"/>
</dbReference>
<dbReference type="GO" id="GO:0006351">
    <property type="term" value="P:DNA-templated transcription"/>
    <property type="evidence" value="ECO:0007669"/>
    <property type="project" value="UniProtKB-UniRule"/>
</dbReference>
<dbReference type="FunFam" id="1.10.10.60:FF:000024">
    <property type="entry name" value="DNA-directed RNA polymerases I, II, and III subunit"/>
    <property type="match status" value="1"/>
</dbReference>
<dbReference type="Gene3D" id="1.10.10.60">
    <property type="entry name" value="Homeodomain-like"/>
    <property type="match status" value="1"/>
</dbReference>
<dbReference type="HAMAP" id="MF_00250">
    <property type="entry name" value="RNApol_arch_Rpo10"/>
    <property type="match status" value="1"/>
</dbReference>
<dbReference type="InterPro" id="IPR023580">
    <property type="entry name" value="RNA_pol_su_RPB10"/>
</dbReference>
<dbReference type="InterPro" id="IPR020789">
    <property type="entry name" value="RNA_pol_suN_Zn-BS"/>
</dbReference>
<dbReference type="InterPro" id="IPR000268">
    <property type="entry name" value="RPABC5/Rpb10"/>
</dbReference>
<dbReference type="NCBIfam" id="NF003089">
    <property type="entry name" value="PRK04016.1"/>
    <property type="match status" value="1"/>
</dbReference>
<dbReference type="PANTHER" id="PTHR23431:SF3">
    <property type="entry name" value="DNA-DIRECTED RNA POLYMERASES I, II, AND III SUBUNIT RPABC5"/>
    <property type="match status" value="1"/>
</dbReference>
<dbReference type="PANTHER" id="PTHR23431">
    <property type="entry name" value="DNA-DIRECTED RNA POLYMERASES I, II, AND III SUBUNIT RPABC5 FAMILY MEMBER"/>
    <property type="match status" value="1"/>
</dbReference>
<dbReference type="Pfam" id="PF01194">
    <property type="entry name" value="RNA_pol_N"/>
    <property type="match status" value="1"/>
</dbReference>
<dbReference type="PIRSF" id="PIRSF005653">
    <property type="entry name" value="RNA_pol_N/8_sub"/>
    <property type="match status" value="1"/>
</dbReference>
<dbReference type="SUPFAM" id="SSF46924">
    <property type="entry name" value="RNA polymerase subunit RPB10"/>
    <property type="match status" value="1"/>
</dbReference>
<dbReference type="PROSITE" id="PS01112">
    <property type="entry name" value="RNA_POL_N_8KD"/>
    <property type="match status" value="1"/>
</dbReference>
<accession>A4WNA8</accession>
<feature type="chain" id="PRO_0000304198" description="DNA-directed RNA polymerase subunit Rpo10">
    <location>
        <begin position="1"/>
        <end position="65"/>
    </location>
</feature>
<feature type="binding site" evidence="1">
    <location>
        <position position="7"/>
    </location>
    <ligand>
        <name>Zn(2+)</name>
        <dbReference type="ChEBI" id="CHEBI:29105"/>
    </ligand>
</feature>
<feature type="binding site" evidence="1">
    <location>
        <position position="10"/>
    </location>
    <ligand>
        <name>Zn(2+)</name>
        <dbReference type="ChEBI" id="CHEBI:29105"/>
    </ligand>
</feature>
<feature type="binding site" evidence="1">
    <location>
        <position position="44"/>
    </location>
    <ligand>
        <name>Zn(2+)</name>
        <dbReference type="ChEBI" id="CHEBI:29105"/>
    </ligand>
</feature>
<feature type="binding site" evidence="1">
    <location>
        <position position="45"/>
    </location>
    <ligand>
        <name>Zn(2+)</name>
        <dbReference type="ChEBI" id="CHEBI:29105"/>
    </ligand>
</feature>
<gene>
    <name evidence="1" type="primary">rpo10</name>
    <name evidence="1" type="synonym">rpoN</name>
    <name type="ordered locus">Pars_2331</name>
</gene>